<sequence>MAPGRRVERVAALIRKETSELLMHGIRDDRVHQGLISITQVDVSGDLQHCKIFVSVLADPEGRAQVMEGLQAASSFLRGELGRRLQMRRAPEVVFHLDRGLEKGASVLGLLGDLERERQERGEIPPGSDDAQNCHDDEPS</sequence>
<organism>
    <name type="scientific">Synechococcus sp. (strain WH7803)</name>
    <dbReference type="NCBI Taxonomy" id="32051"/>
    <lineage>
        <taxon>Bacteria</taxon>
        <taxon>Bacillati</taxon>
        <taxon>Cyanobacteriota</taxon>
        <taxon>Cyanophyceae</taxon>
        <taxon>Synechococcales</taxon>
        <taxon>Synechococcaceae</taxon>
        <taxon>Synechococcus</taxon>
    </lineage>
</organism>
<feature type="chain" id="PRO_1000000234" description="Ribosome-binding factor A">
    <location>
        <begin position="1"/>
        <end position="140"/>
    </location>
</feature>
<feature type="region of interest" description="Disordered" evidence="2">
    <location>
        <begin position="116"/>
        <end position="140"/>
    </location>
</feature>
<reference key="1">
    <citation type="submission" date="2006-05" db="EMBL/GenBank/DDBJ databases">
        <authorList>
            <consortium name="Genoscope"/>
        </authorList>
    </citation>
    <scope>NUCLEOTIDE SEQUENCE [LARGE SCALE GENOMIC DNA]</scope>
    <source>
        <strain>WH7803</strain>
    </source>
</reference>
<name>RBFA_SYNPW</name>
<keyword id="KW-0963">Cytoplasm</keyword>
<keyword id="KW-1185">Reference proteome</keyword>
<keyword id="KW-0690">Ribosome biogenesis</keyword>
<gene>
    <name evidence="1" type="primary">rbfA</name>
    <name type="ordered locus">SynWH7803_2218</name>
</gene>
<dbReference type="EMBL" id="CT971583">
    <property type="protein sequence ID" value="CAK24644.1"/>
    <property type="molecule type" value="Genomic_DNA"/>
</dbReference>
<dbReference type="SMR" id="A5GNX9"/>
<dbReference type="STRING" id="32051.SynWH7803_2218"/>
<dbReference type="KEGG" id="syx:SynWH7803_2218"/>
<dbReference type="eggNOG" id="COG0858">
    <property type="taxonomic scope" value="Bacteria"/>
</dbReference>
<dbReference type="HOGENOM" id="CLU_089475_2_1_3"/>
<dbReference type="OrthoDB" id="307788at2"/>
<dbReference type="Proteomes" id="UP000001566">
    <property type="component" value="Chromosome"/>
</dbReference>
<dbReference type="GO" id="GO:0005829">
    <property type="term" value="C:cytosol"/>
    <property type="evidence" value="ECO:0007669"/>
    <property type="project" value="TreeGrafter"/>
</dbReference>
<dbReference type="GO" id="GO:0043024">
    <property type="term" value="F:ribosomal small subunit binding"/>
    <property type="evidence" value="ECO:0007669"/>
    <property type="project" value="TreeGrafter"/>
</dbReference>
<dbReference type="GO" id="GO:0030490">
    <property type="term" value="P:maturation of SSU-rRNA"/>
    <property type="evidence" value="ECO:0007669"/>
    <property type="project" value="UniProtKB-UniRule"/>
</dbReference>
<dbReference type="Gene3D" id="3.30.300.20">
    <property type="match status" value="1"/>
</dbReference>
<dbReference type="HAMAP" id="MF_00003">
    <property type="entry name" value="RbfA"/>
    <property type="match status" value="1"/>
</dbReference>
<dbReference type="InterPro" id="IPR015946">
    <property type="entry name" value="KH_dom-like_a/b"/>
</dbReference>
<dbReference type="InterPro" id="IPR000238">
    <property type="entry name" value="RbfA"/>
</dbReference>
<dbReference type="InterPro" id="IPR023799">
    <property type="entry name" value="RbfA_dom_sf"/>
</dbReference>
<dbReference type="InterPro" id="IPR020053">
    <property type="entry name" value="Ribosome-bd_factorA_CS"/>
</dbReference>
<dbReference type="NCBIfam" id="TIGR00082">
    <property type="entry name" value="rbfA"/>
    <property type="match status" value="1"/>
</dbReference>
<dbReference type="PANTHER" id="PTHR33515">
    <property type="entry name" value="RIBOSOME-BINDING FACTOR A, CHLOROPLASTIC-RELATED"/>
    <property type="match status" value="1"/>
</dbReference>
<dbReference type="PANTHER" id="PTHR33515:SF1">
    <property type="entry name" value="RIBOSOME-BINDING FACTOR A, CHLOROPLASTIC-RELATED"/>
    <property type="match status" value="1"/>
</dbReference>
<dbReference type="Pfam" id="PF02033">
    <property type="entry name" value="RBFA"/>
    <property type="match status" value="1"/>
</dbReference>
<dbReference type="SUPFAM" id="SSF89919">
    <property type="entry name" value="Ribosome-binding factor A, RbfA"/>
    <property type="match status" value="1"/>
</dbReference>
<dbReference type="PROSITE" id="PS01319">
    <property type="entry name" value="RBFA"/>
    <property type="match status" value="1"/>
</dbReference>
<evidence type="ECO:0000255" key="1">
    <source>
        <dbReference type="HAMAP-Rule" id="MF_00003"/>
    </source>
</evidence>
<evidence type="ECO:0000256" key="2">
    <source>
        <dbReference type="SAM" id="MobiDB-lite"/>
    </source>
</evidence>
<proteinExistence type="inferred from homology"/>
<comment type="function">
    <text evidence="1">One of several proteins that assist in the late maturation steps of the functional core of the 30S ribosomal subunit. Associates with free 30S ribosomal subunits (but not with 30S subunits that are part of 70S ribosomes or polysomes). Required for efficient processing of 16S rRNA. May interact with the 5'-terminal helix region of 16S rRNA.</text>
</comment>
<comment type="subunit">
    <text evidence="1">Monomer. Binds 30S ribosomal subunits, but not 50S ribosomal subunits or 70S ribosomes.</text>
</comment>
<comment type="subcellular location">
    <subcellularLocation>
        <location evidence="1">Cytoplasm</location>
    </subcellularLocation>
</comment>
<comment type="similarity">
    <text evidence="1">Belongs to the RbfA family.</text>
</comment>
<protein>
    <recommendedName>
        <fullName evidence="1">Ribosome-binding factor A</fullName>
    </recommendedName>
</protein>
<accession>A5GNX9</accession>